<keyword id="KW-0963">Cytoplasm</keyword>
<keyword id="KW-0238">DNA-binding</keyword>
<keyword id="KW-0804">Transcription</keyword>
<keyword id="KW-0805">Transcription regulation</keyword>
<evidence type="ECO:0000255" key="1">
    <source>
        <dbReference type="HAMAP-Rule" id="MF_00693"/>
    </source>
</evidence>
<feature type="chain" id="PRO_1000132174" description="Probable transcriptional regulatory protein CLH_0943">
    <location>
        <begin position="1"/>
        <end position="246"/>
    </location>
</feature>
<organism>
    <name type="scientific">Clostridium botulinum (strain Alaska E43 / Type E3)</name>
    <dbReference type="NCBI Taxonomy" id="508767"/>
    <lineage>
        <taxon>Bacteria</taxon>
        <taxon>Bacillati</taxon>
        <taxon>Bacillota</taxon>
        <taxon>Clostridia</taxon>
        <taxon>Eubacteriales</taxon>
        <taxon>Clostridiaceae</taxon>
        <taxon>Clostridium</taxon>
    </lineage>
</organism>
<sequence>MSGHSKWHNIQAKKGKTDAKRGKIFTKIGKELMVAVKNGGPSPETNNRLRDIIAKAKAANMPNDTITRSIKKASGELGSVNYENIIYEGYGPSGVAVIVETLTDNKNRSAGNVRSAFTKGGGNMGTQGCVGFMFQEKGEMVIEKADKDEDEMMMLALDAGAEDFNADEDEVFVVTTTPEDFGTVREALEAEGIEFLEADVKMIPDTYTAIDEADAKKFQKMLDLLEDDEDVQEVYHNAEFPEGWEE</sequence>
<accession>B2V2S0</accession>
<protein>
    <recommendedName>
        <fullName evidence="1">Probable transcriptional regulatory protein CLH_0943</fullName>
    </recommendedName>
</protein>
<reference key="1">
    <citation type="submission" date="2008-05" db="EMBL/GenBank/DDBJ databases">
        <title>Complete genome sequence of Clostridium botulinum E3 str. Alaska E43.</title>
        <authorList>
            <person name="Brinkac L.M."/>
            <person name="Brown J.L."/>
            <person name="Bruce D."/>
            <person name="Detter C."/>
            <person name="Munk C."/>
            <person name="Smith L.A."/>
            <person name="Smith T.J."/>
            <person name="Sutton G."/>
            <person name="Brettin T.S."/>
        </authorList>
    </citation>
    <scope>NUCLEOTIDE SEQUENCE [LARGE SCALE GENOMIC DNA]</scope>
    <source>
        <strain>Alaska E43 / Type E3</strain>
    </source>
</reference>
<comment type="subcellular location">
    <subcellularLocation>
        <location evidence="1">Cytoplasm</location>
    </subcellularLocation>
</comment>
<comment type="similarity">
    <text evidence="1">Belongs to the TACO1 family.</text>
</comment>
<proteinExistence type="inferred from homology"/>
<dbReference type="EMBL" id="CP001078">
    <property type="protein sequence ID" value="ACD52591.1"/>
    <property type="molecule type" value="Genomic_DNA"/>
</dbReference>
<dbReference type="RefSeq" id="WP_003371887.1">
    <property type="nucleotide sequence ID" value="NC_010723.1"/>
</dbReference>
<dbReference type="SMR" id="B2V2S0"/>
<dbReference type="KEGG" id="cbt:CLH_0943"/>
<dbReference type="HOGENOM" id="CLU_062974_2_2_9"/>
<dbReference type="GO" id="GO:0005829">
    <property type="term" value="C:cytosol"/>
    <property type="evidence" value="ECO:0007669"/>
    <property type="project" value="TreeGrafter"/>
</dbReference>
<dbReference type="GO" id="GO:0003677">
    <property type="term" value="F:DNA binding"/>
    <property type="evidence" value="ECO:0007669"/>
    <property type="project" value="UniProtKB-UniRule"/>
</dbReference>
<dbReference type="GO" id="GO:0006355">
    <property type="term" value="P:regulation of DNA-templated transcription"/>
    <property type="evidence" value="ECO:0007669"/>
    <property type="project" value="UniProtKB-UniRule"/>
</dbReference>
<dbReference type="FunFam" id="1.10.10.200:FF:000002">
    <property type="entry name" value="Probable transcriptional regulatory protein CLM62_37755"/>
    <property type="match status" value="1"/>
</dbReference>
<dbReference type="FunFam" id="3.30.70.980:FF:000002">
    <property type="entry name" value="Probable transcriptional regulatory protein YebC"/>
    <property type="match status" value="1"/>
</dbReference>
<dbReference type="Gene3D" id="1.10.10.200">
    <property type="match status" value="1"/>
</dbReference>
<dbReference type="Gene3D" id="3.30.70.980">
    <property type="match status" value="2"/>
</dbReference>
<dbReference type="HAMAP" id="MF_00693">
    <property type="entry name" value="Transcrip_reg_TACO1"/>
    <property type="match status" value="1"/>
</dbReference>
<dbReference type="InterPro" id="IPR017856">
    <property type="entry name" value="Integrase-like_N"/>
</dbReference>
<dbReference type="InterPro" id="IPR048300">
    <property type="entry name" value="TACO1_YebC-like_2nd/3rd_dom"/>
</dbReference>
<dbReference type="InterPro" id="IPR049083">
    <property type="entry name" value="TACO1_YebC_N"/>
</dbReference>
<dbReference type="InterPro" id="IPR002876">
    <property type="entry name" value="Transcrip_reg_TACO1-like"/>
</dbReference>
<dbReference type="InterPro" id="IPR026564">
    <property type="entry name" value="Transcrip_reg_TACO1-like_dom3"/>
</dbReference>
<dbReference type="InterPro" id="IPR029072">
    <property type="entry name" value="YebC-like"/>
</dbReference>
<dbReference type="NCBIfam" id="NF001030">
    <property type="entry name" value="PRK00110.1"/>
    <property type="match status" value="1"/>
</dbReference>
<dbReference type="NCBIfam" id="NF009044">
    <property type="entry name" value="PRK12378.1"/>
    <property type="match status" value="1"/>
</dbReference>
<dbReference type="NCBIfam" id="TIGR01033">
    <property type="entry name" value="YebC/PmpR family DNA-binding transcriptional regulator"/>
    <property type="match status" value="1"/>
</dbReference>
<dbReference type="PANTHER" id="PTHR12532:SF6">
    <property type="entry name" value="TRANSCRIPTIONAL REGULATORY PROTEIN YEBC-RELATED"/>
    <property type="match status" value="1"/>
</dbReference>
<dbReference type="PANTHER" id="PTHR12532">
    <property type="entry name" value="TRANSLATIONAL ACTIVATOR OF CYTOCHROME C OXIDASE 1"/>
    <property type="match status" value="1"/>
</dbReference>
<dbReference type="Pfam" id="PF20772">
    <property type="entry name" value="TACO1_YebC_N"/>
    <property type="match status" value="1"/>
</dbReference>
<dbReference type="Pfam" id="PF01709">
    <property type="entry name" value="Transcrip_reg"/>
    <property type="match status" value="1"/>
</dbReference>
<dbReference type="SUPFAM" id="SSF75625">
    <property type="entry name" value="YebC-like"/>
    <property type="match status" value="1"/>
</dbReference>
<name>Y943_CLOBA</name>
<gene>
    <name type="ordered locus">CLH_0943</name>
</gene>